<accession>P9WPS2</accession>
<accession>L0T821</accession>
<accession>P77894</accession>
<keyword id="KW-0067">ATP-binding</keyword>
<keyword id="KW-1003">Cell membrane</keyword>
<keyword id="KW-0186">Copper</keyword>
<keyword id="KW-0187">Copper transport</keyword>
<keyword id="KW-0406">Ion transport</keyword>
<keyword id="KW-0460">Magnesium</keyword>
<keyword id="KW-0472">Membrane</keyword>
<keyword id="KW-0479">Metal-binding</keyword>
<keyword id="KW-0547">Nucleotide-binding</keyword>
<keyword id="KW-0597">Phosphoprotein</keyword>
<keyword id="KW-1185">Reference proteome</keyword>
<keyword id="KW-1278">Translocase</keyword>
<keyword id="KW-0812">Transmembrane</keyword>
<keyword id="KW-1133">Transmembrane helix</keyword>
<keyword id="KW-0813">Transport</keyword>
<feature type="chain" id="PRO_0000426897" description="Probable copper-exporting P-type ATPase V">
    <location>
        <begin position="1"/>
        <end position="770"/>
    </location>
</feature>
<feature type="transmembrane region" description="Helical" evidence="2">
    <location>
        <begin position="141"/>
        <end position="161"/>
    </location>
</feature>
<feature type="transmembrane region" description="Helical" evidence="2">
    <location>
        <begin position="164"/>
        <end position="184"/>
    </location>
</feature>
<feature type="transmembrane region" description="Helical" evidence="2">
    <location>
        <begin position="193"/>
        <end position="213"/>
    </location>
</feature>
<feature type="transmembrane region" description="Helical" evidence="2">
    <location>
        <begin position="217"/>
        <end position="237"/>
    </location>
</feature>
<feature type="transmembrane region" description="Helical" evidence="2">
    <location>
        <begin position="377"/>
        <end position="397"/>
    </location>
</feature>
<feature type="transmembrane region" description="Helical" evidence="2">
    <location>
        <begin position="402"/>
        <end position="422"/>
    </location>
</feature>
<feature type="transmembrane region" description="Helical" evidence="2">
    <location>
        <begin position="718"/>
        <end position="737"/>
    </location>
</feature>
<feature type="transmembrane region" description="Helical" evidence="2">
    <location>
        <begin position="741"/>
        <end position="760"/>
    </location>
</feature>
<feature type="domain" description="HMA" evidence="3">
    <location>
        <begin position="1"/>
        <end position="66"/>
    </location>
</feature>
<feature type="region of interest" description="Disordered" evidence="4">
    <location>
        <begin position="103"/>
        <end position="130"/>
    </location>
</feature>
<feature type="compositionally biased region" description="Low complexity" evidence="4">
    <location>
        <begin position="110"/>
        <end position="121"/>
    </location>
</feature>
<feature type="active site" description="4-aspartylphosphate intermediate" evidence="1">
    <location>
        <position position="460"/>
    </location>
</feature>
<feature type="binding site" evidence="1">
    <location>
        <position position="660"/>
    </location>
    <ligand>
        <name>Mg(2+)</name>
        <dbReference type="ChEBI" id="CHEBI:18420"/>
    </ligand>
</feature>
<feature type="binding site" evidence="1">
    <location>
        <position position="664"/>
    </location>
    <ligand>
        <name>Mg(2+)</name>
        <dbReference type="ChEBI" id="CHEBI:18420"/>
    </ligand>
</feature>
<proteinExistence type="inferred from homology"/>
<dbReference type="EC" id="7.2.2.8"/>
<dbReference type="EMBL" id="AE000516">
    <property type="protein sequence ID" value="AAK45246.1"/>
    <property type="status" value="ALT_INIT"/>
    <property type="molecule type" value="Genomic_DNA"/>
</dbReference>
<dbReference type="PIR" id="G70718">
    <property type="entry name" value="G70718"/>
</dbReference>
<dbReference type="RefSeq" id="WP_009935691.1">
    <property type="nucleotide sequence ID" value="NZ_KK341227.1"/>
</dbReference>
<dbReference type="SMR" id="P9WPS2"/>
<dbReference type="KEGG" id="mtc:MT0997"/>
<dbReference type="PATRIC" id="fig|83331.31.peg.1069"/>
<dbReference type="HOGENOM" id="CLU_001771_11_2_11"/>
<dbReference type="Proteomes" id="UP000001020">
    <property type="component" value="Chromosome"/>
</dbReference>
<dbReference type="GO" id="GO:0005886">
    <property type="term" value="C:plasma membrane"/>
    <property type="evidence" value="ECO:0007669"/>
    <property type="project" value="UniProtKB-SubCell"/>
</dbReference>
<dbReference type="GO" id="GO:0005524">
    <property type="term" value="F:ATP binding"/>
    <property type="evidence" value="ECO:0007669"/>
    <property type="project" value="UniProtKB-KW"/>
</dbReference>
<dbReference type="GO" id="GO:0016887">
    <property type="term" value="F:ATP hydrolysis activity"/>
    <property type="evidence" value="ECO:0007669"/>
    <property type="project" value="InterPro"/>
</dbReference>
<dbReference type="GO" id="GO:0005507">
    <property type="term" value="F:copper ion binding"/>
    <property type="evidence" value="ECO:0007669"/>
    <property type="project" value="TreeGrafter"/>
</dbReference>
<dbReference type="GO" id="GO:0043682">
    <property type="term" value="F:P-type divalent copper transporter activity"/>
    <property type="evidence" value="ECO:0007669"/>
    <property type="project" value="TreeGrafter"/>
</dbReference>
<dbReference type="GO" id="GO:0140581">
    <property type="term" value="F:P-type monovalent copper transporter activity"/>
    <property type="evidence" value="ECO:0007669"/>
    <property type="project" value="UniProtKB-EC"/>
</dbReference>
<dbReference type="GO" id="GO:0055070">
    <property type="term" value="P:copper ion homeostasis"/>
    <property type="evidence" value="ECO:0007669"/>
    <property type="project" value="TreeGrafter"/>
</dbReference>
<dbReference type="CDD" id="cd02094">
    <property type="entry name" value="P-type_ATPase_Cu-like"/>
    <property type="match status" value="1"/>
</dbReference>
<dbReference type="FunFam" id="2.70.150.10:FF:000020">
    <property type="entry name" value="Copper-exporting P-type ATPase A"/>
    <property type="match status" value="1"/>
</dbReference>
<dbReference type="FunFam" id="3.40.50.1000:FF:000144">
    <property type="entry name" value="copper-transporting ATPase 1 isoform X2"/>
    <property type="match status" value="1"/>
</dbReference>
<dbReference type="Gene3D" id="3.40.1110.10">
    <property type="entry name" value="Calcium-transporting ATPase, cytoplasmic domain N"/>
    <property type="match status" value="1"/>
</dbReference>
<dbReference type="Gene3D" id="2.70.150.10">
    <property type="entry name" value="Calcium-transporting ATPase, cytoplasmic transduction domain A"/>
    <property type="match status" value="1"/>
</dbReference>
<dbReference type="Gene3D" id="3.40.50.1000">
    <property type="entry name" value="HAD superfamily/HAD-like"/>
    <property type="match status" value="1"/>
</dbReference>
<dbReference type="InterPro" id="IPR023299">
    <property type="entry name" value="ATPase_P-typ_cyto_dom_N"/>
</dbReference>
<dbReference type="InterPro" id="IPR018303">
    <property type="entry name" value="ATPase_P-typ_P_site"/>
</dbReference>
<dbReference type="InterPro" id="IPR023298">
    <property type="entry name" value="ATPase_P-typ_TM_dom_sf"/>
</dbReference>
<dbReference type="InterPro" id="IPR008250">
    <property type="entry name" value="ATPase_P-typ_transduc_dom_A_sf"/>
</dbReference>
<dbReference type="InterPro" id="IPR036412">
    <property type="entry name" value="HAD-like_sf"/>
</dbReference>
<dbReference type="InterPro" id="IPR023214">
    <property type="entry name" value="HAD_sf"/>
</dbReference>
<dbReference type="InterPro" id="IPR006121">
    <property type="entry name" value="HMA_dom"/>
</dbReference>
<dbReference type="InterPro" id="IPR027256">
    <property type="entry name" value="P-typ_ATPase_IB"/>
</dbReference>
<dbReference type="InterPro" id="IPR001757">
    <property type="entry name" value="P_typ_ATPase"/>
</dbReference>
<dbReference type="InterPro" id="IPR044492">
    <property type="entry name" value="P_typ_ATPase_HD_dom"/>
</dbReference>
<dbReference type="NCBIfam" id="TIGR01511">
    <property type="entry name" value="ATPase-IB1_Cu"/>
    <property type="match status" value="1"/>
</dbReference>
<dbReference type="NCBIfam" id="TIGR01525">
    <property type="entry name" value="ATPase-IB_hvy"/>
    <property type="match status" value="1"/>
</dbReference>
<dbReference type="NCBIfam" id="TIGR01494">
    <property type="entry name" value="ATPase_P-type"/>
    <property type="match status" value="1"/>
</dbReference>
<dbReference type="PANTHER" id="PTHR43520">
    <property type="entry name" value="ATP7, ISOFORM B"/>
    <property type="match status" value="1"/>
</dbReference>
<dbReference type="PANTHER" id="PTHR43520:SF8">
    <property type="entry name" value="P-TYPE CU(+) TRANSPORTER"/>
    <property type="match status" value="1"/>
</dbReference>
<dbReference type="Pfam" id="PF00122">
    <property type="entry name" value="E1-E2_ATPase"/>
    <property type="match status" value="1"/>
</dbReference>
<dbReference type="Pfam" id="PF00702">
    <property type="entry name" value="Hydrolase"/>
    <property type="match status" value="1"/>
</dbReference>
<dbReference type="PRINTS" id="PR00119">
    <property type="entry name" value="CATATPASE"/>
</dbReference>
<dbReference type="PRINTS" id="PR00120">
    <property type="entry name" value="HATPASE"/>
</dbReference>
<dbReference type="SFLD" id="SFLDG00002">
    <property type="entry name" value="C1.7:_P-type_atpase_like"/>
    <property type="match status" value="1"/>
</dbReference>
<dbReference type="SFLD" id="SFLDF00027">
    <property type="entry name" value="p-type_atpase"/>
    <property type="match status" value="1"/>
</dbReference>
<dbReference type="SUPFAM" id="SSF81653">
    <property type="entry name" value="Calcium ATPase, transduction domain A"/>
    <property type="match status" value="1"/>
</dbReference>
<dbReference type="SUPFAM" id="SSF81665">
    <property type="entry name" value="Calcium ATPase, transmembrane domain M"/>
    <property type="match status" value="1"/>
</dbReference>
<dbReference type="SUPFAM" id="SSF56784">
    <property type="entry name" value="HAD-like"/>
    <property type="match status" value="1"/>
</dbReference>
<dbReference type="PROSITE" id="PS00154">
    <property type="entry name" value="ATPASE_E1_E2"/>
    <property type="match status" value="1"/>
</dbReference>
<dbReference type="PROSITE" id="PS50846">
    <property type="entry name" value="HMA_2"/>
    <property type="match status" value="1"/>
</dbReference>
<organism>
    <name type="scientific">Mycobacterium tuberculosis (strain CDC 1551 / Oshkosh)</name>
    <dbReference type="NCBI Taxonomy" id="83331"/>
    <lineage>
        <taxon>Bacteria</taxon>
        <taxon>Bacillati</taxon>
        <taxon>Actinomycetota</taxon>
        <taxon>Actinomycetes</taxon>
        <taxon>Mycobacteriales</taxon>
        <taxon>Mycobacteriaceae</taxon>
        <taxon>Mycobacterium</taxon>
        <taxon>Mycobacterium tuberculosis complex</taxon>
    </lineage>
</organism>
<sequence length="770" mass="80103">MRVCVTGFNVDAVRAVAIEETVSQVTGVHAVHAYPRTASVVIWYSPELGDTAAVLSAITKAQHVPAELVPARAPHSAGVRGVGVVRKITGGIRRMLSRPPGVDKPLKASRCGGRPRGPVRGSASWPGEQNRRERRTWLPRVWLALPLGLLALGSSMFFGAYPWAGWLAFAATLPVQFVAGWPILRGAVQQARALTSNMDTLIALGTLTAFVYSTYQLFAGGPLFFDTSALIIAFVVLGRHLEARATGKASEAISKLLELGAKEATLLVDGQELLVPVDQVQVGDLVRVRPGEKIPVDGEVTDGRAAVDESMLTGESVPVEKTAGDRVAGATVNLDGLLTVRATAVGADTALAQIVRLVEQAQGDKAPVQRLADRVSAVFVPAVIGVAVATFAGWTLIAANPVAGMTAAVAVLIIACPCALGLATPTAIMVGTGRGAELGILVKGGEVLEASKKIDTVVFDKTGTLTRARMRVTDVIAGQRRQPDQVLRLAAAVESGSEHPIGAAIVAAAHERGLAIPAANAFTAVAGHGVRAQVNGGPVVVGRRKLVDEQHLVLPDHLAAAAVEQEERGRTAVFVGQDGQVVGVLAVADTVKDDAADVVGRLHAMGLQVAMITGDNARTAAAIAKQVGIEKVLAEVLPQDKVAEVRRLQDQGRVVAMVGDGVNDAPALVQADLGIAIGTGTDVAIEASDITLMSGRLDGVVRAIELSRQTLRTIYQNLGWAFGYNTAAIPLAALGALNPVVAGAAMGFSSVSVVTNSLRLRRFGRDGRTA</sequence>
<protein>
    <recommendedName>
        <fullName>Probable copper-exporting P-type ATPase V</fullName>
        <ecNumber>7.2.2.8</ecNumber>
    </recommendedName>
    <alternativeName>
        <fullName>Cu(+)-exporting ATPase</fullName>
    </alternativeName>
</protein>
<evidence type="ECO:0000250" key="1"/>
<evidence type="ECO:0000255" key="2"/>
<evidence type="ECO:0000255" key="3">
    <source>
        <dbReference type="PROSITE-ProRule" id="PRU00280"/>
    </source>
</evidence>
<evidence type="ECO:0000256" key="4">
    <source>
        <dbReference type="SAM" id="MobiDB-lite"/>
    </source>
</evidence>
<evidence type="ECO:0000305" key="5"/>
<comment type="function">
    <text evidence="1">Necessary for copper homeostasis and likely functions as a copper exporter. Also required for full virulence (By similarity).</text>
</comment>
<comment type="catalytic activity">
    <reaction>
        <text>Cu(+)(in) + ATP + H2O = Cu(+)(out) + ADP + phosphate + H(+)</text>
        <dbReference type="Rhea" id="RHEA:25792"/>
        <dbReference type="ChEBI" id="CHEBI:15377"/>
        <dbReference type="ChEBI" id="CHEBI:15378"/>
        <dbReference type="ChEBI" id="CHEBI:30616"/>
        <dbReference type="ChEBI" id="CHEBI:43474"/>
        <dbReference type="ChEBI" id="CHEBI:49552"/>
        <dbReference type="ChEBI" id="CHEBI:456216"/>
        <dbReference type="EC" id="7.2.2.8"/>
    </reaction>
</comment>
<comment type="subcellular location">
    <subcellularLocation>
        <location evidence="1">Cell membrane</location>
        <topology evidence="1">Multi-pass membrane protein</topology>
    </subcellularLocation>
</comment>
<comment type="similarity">
    <text evidence="5">Belongs to the cation transport ATPase (P-type) (TC 3.A.3) family. Type IB subfamily.</text>
</comment>
<comment type="sequence caution" evidence="5">
    <conflict type="erroneous initiation">
        <sequence resource="EMBL-CDS" id="AAK45246"/>
    </conflict>
    <text>Extended N-terminus.</text>
</comment>
<gene>
    <name type="primary">ctpV</name>
    <name type="ordered locus">MT0997</name>
</gene>
<name>CTPV_MYCTO</name>
<reference key="1">
    <citation type="journal article" date="2002" name="J. Bacteriol.">
        <title>Whole-genome comparison of Mycobacterium tuberculosis clinical and laboratory strains.</title>
        <authorList>
            <person name="Fleischmann R.D."/>
            <person name="Alland D."/>
            <person name="Eisen J.A."/>
            <person name="Carpenter L."/>
            <person name="White O."/>
            <person name="Peterson J.D."/>
            <person name="DeBoy R.T."/>
            <person name="Dodson R.J."/>
            <person name="Gwinn M.L."/>
            <person name="Haft D.H."/>
            <person name="Hickey E.K."/>
            <person name="Kolonay J.F."/>
            <person name="Nelson W.C."/>
            <person name="Umayam L.A."/>
            <person name="Ermolaeva M.D."/>
            <person name="Salzberg S.L."/>
            <person name="Delcher A."/>
            <person name="Utterback T.R."/>
            <person name="Weidman J.F."/>
            <person name="Khouri H.M."/>
            <person name="Gill J."/>
            <person name="Mikula A."/>
            <person name="Bishai W."/>
            <person name="Jacobs W.R. Jr."/>
            <person name="Venter J.C."/>
            <person name="Fraser C.M."/>
        </authorList>
    </citation>
    <scope>NUCLEOTIDE SEQUENCE [LARGE SCALE GENOMIC DNA]</scope>
    <source>
        <strain>CDC 1551 / Oshkosh</strain>
    </source>
</reference>